<keyword id="KW-0472">Membrane</keyword>
<keyword id="KW-0496">Mitochondrion</keyword>
<keyword id="KW-0999">Mitochondrion inner membrane</keyword>
<keyword id="KW-1185">Reference proteome</keyword>
<keyword id="KW-0677">Repeat</keyword>
<keyword id="KW-0812">Transmembrane</keyword>
<keyword id="KW-1133">Transmembrane helix</keyword>
<keyword id="KW-0813">Transport</keyword>
<gene>
    <name type="ORF">HCAG_06120</name>
</gene>
<protein>
    <recommendedName>
        <fullName evidence="2">Mitochondrial glycine transporter</fullName>
    </recommendedName>
    <alternativeName>
        <fullName evidence="2">Solute carrier family 25 member 38 homolog</fullName>
    </alternativeName>
</protein>
<dbReference type="EMBL" id="CH476661">
    <property type="protein sequence ID" value="EDN10317.1"/>
    <property type="molecule type" value="Genomic_DNA"/>
</dbReference>
<dbReference type="RefSeq" id="XP_001538515.1">
    <property type="nucleotide sequence ID" value="XM_001538465.1"/>
</dbReference>
<dbReference type="SMR" id="A6RAY2"/>
<dbReference type="STRING" id="339724.A6RAY2"/>
<dbReference type="GeneID" id="5444700"/>
<dbReference type="KEGG" id="aje:HCAG_06120"/>
<dbReference type="VEuPathDB" id="FungiDB:HCAG_06120"/>
<dbReference type="HOGENOM" id="CLU_015166_0_3_1"/>
<dbReference type="OMA" id="WGIYEEL"/>
<dbReference type="OrthoDB" id="8685at299071"/>
<dbReference type="Proteomes" id="UP000009297">
    <property type="component" value="Unassembled WGS sequence"/>
</dbReference>
<dbReference type="GO" id="GO:0005743">
    <property type="term" value="C:mitochondrial inner membrane"/>
    <property type="evidence" value="ECO:0007669"/>
    <property type="project" value="UniProtKB-SubCell"/>
</dbReference>
<dbReference type="GO" id="GO:0015187">
    <property type="term" value="F:glycine transmembrane transporter activity"/>
    <property type="evidence" value="ECO:0007669"/>
    <property type="project" value="UniProtKB-UniRule"/>
</dbReference>
<dbReference type="GO" id="GO:1904983">
    <property type="term" value="P:glycine import into mitochondrion"/>
    <property type="evidence" value="ECO:0007669"/>
    <property type="project" value="UniProtKB-UniRule"/>
</dbReference>
<dbReference type="FunFam" id="1.50.40.10:FF:000103">
    <property type="entry name" value="Mitochondrial glycine transporter"/>
    <property type="match status" value="1"/>
</dbReference>
<dbReference type="Gene3D" id="1.50.40.10">
    <property type="entry name" value="Mitochondrial carrier domain"/>
    <property type="match status" value="2"/>
</dbReference>
<dbReference type="HAMAP" id="MF_03064">
    <property type="entry name" value="SLC25A38"/>
    <property type="match status" value="1"/>
</dbReference>
<dbReference type="InterPro" id="IPR030847">
    <property type="entry name" value="Hem25/SLC25A38"/>
</dbReference>
<dbReference type="InterPro" id="IPR018108">
    <property type="entry name" value="Mitochondrial_sb/sol_carrier"/>
</dbReference>
<dbReference type="InterPro" id="IPR023395">
    <property type="entry name" value="Mt_carrier_dom_sf"/>
</dbReference>
<dbReference type="PANTHER" id="PTHR46181">
    <property type="entry name" value="MITOCHONDRIAL GLYCINE TRANSPORTER"/>
    <property type="match status" value="1"/>
</dbReference>
<dbReference type="PANTHER" id="PTHR46181:SF3">
    <property type="entry name" value="MITOCHONDRIAL GLYCINE TRANSPORTER"/>
    <property type="match status" value="1"/>
</dbReference>
<dbReference type="Pfam" id="PF00153">
    <property type="entry name" value="Mito_carr"/>
    <property type="match status" value="3"/>
</dbReference>
<dbReference type="SUPFAM" id="SSF103506">
    <property type="entry name" value="Mitochondrial carrier"/>
    <property type="match status" value="1"/>
</dbReference>
<dbReference type="PROSITE" id="PS50920">
    <property type="entry name" value="SOLCAR"/>
    <property type="match status" value="3"/>
</dbReference>
<organism>
    <name type="scientific">Ajellomyces capsulatus (strain NAm1 / WU24)</name>
    <name type="common">Darling's disease fungus</name>
    <name type="synonym">Histoplasma capsulatum</name>
    <dbReference type="NCBI Taxonomy" id="2059318"/>
    <lineage>
        <taxon>Eukaryota</taxon>
        <taxon>Fungi</taxon>
        <taxon>Dikarya</taxon>
        <taxon>Ascomycota</taxon>
        <taxon>Pezizomycotina</taxon>
        <taxon>Eurotiomycetes</taxon>
        <taxon>Eurotiomycetidae</taxon>
        <taxon>Onygenales</taxon>
        <taxon>Ajellomycetaceae</taxon>
        <taxon>Histoplasma</taxon>
    </lineage>
</organism>
<proteinExistence type="inferred from homology"/>
<name>S2538_AJECN</name>
<evidence type="ECO:0000250" key="1">
    <source>
        <dbReference type="UniProtKB" id="Q96DW6"/>
    </source>
</evidence>
<evidence type="ECO:0000255" key="2">
    <source>
        <dbReference type="HAMAP-Rule" id="MF_03064"/>
    </source>
</evidence>
<feature type="chain" id="PRO_0000378922" description="Mitochondrial glycine transporter">
    <location>
        <begin position="1"/>
        <end position="350"/>
    </location>
</feature>
<feature type="transmembrane region" description="Helical; Name=1" evidence="2">
    <location>
        <begin position="29"/>
        <end position="54"/>
    </location>
</feature>
<feature type="transmembrane region" description="Helical; Name=2" evidence="2">
    <location>
        <begin position="82"/>
        <end position="108"/>
    </location>
</feature>
<feature type="transmembrane region" description="Helical; Name=3" evidence="2">
    <location>
        <begin position="140"/>
        <end position="165"/>
    </location>
</feature>
<feature type="transmembrane region" description="Helical; Name=4" evidence="2">
    <location>
        <begin position="193"/>
        <end position="216"/>
    </location>
</feature>
<feature type="transmembrane region" description="Helical; Name=5" evidence="2">
    <location>
        <begin position="254"/>
        <end position="280"/>
    </location>
</feature>
<feature type="transmembrane region" description="Helical; Name=6" evidence="2">
    <location>
        <begin position="309"/>
        <end position="327"/>
    </location>
</feature>
<feature type="repeat" description="Solcar 1" evidence="2">
    <location>
        <begin position="23"/>
        <end position="107"/>
    </location>
</feature>
<feature type="repeat" description="Solcar 2" evidence="2">
    <location>
        <begin position="134"/>
        <end position="218"/>
    </location>
</feature>
<feature type="repeat" description="Solcar 3" evidence="2">
    <location>
        <begin position="250"/>
        <end position="334"/>
    </location>
</feature>
<sequence>MLATADMSDGYTNGARLKISTSSKPKFHFIAGLASGLSSAILLQPADLLKTRIQQAHQTSALLFTIRKILASPQPIRGLWRGTLPSALRTGFGSALYFSSLNALRQCIANQGALVPLHGDRDDKRTRTSALPKLSHTANLLTGAMARTAAGFIMMPVTVIKVRYESDYYAYRSIWGAGRDIVRSEGFRGLFSGFGATAIRDAPYAGLYVVFYEQSKKNLNALNFGGLTTARPLSDEPAREDNSEKQLVTSSISVNFVSGALAAGLATSITNPFDVVKTRLQLMPNKYRNMAHAVRLVLREDGVRSLFGGLGLRMGRKAISSALAWTVYEELILKAEKRWPDQDNIEQLTP</sequence>
<comment type="function">
    <text evidence="2">Mitochondrial glycine transporter that imports glycine into the mitochondrial matrix. Plays an important role in providing glycine for the first enzymatic step in heme biosynthesis, the condensation of glycine with succinyl-CoA to produce 5-aminolevulinate (ALA) in the mitochondrial matrix.</text>
</comment>
<comment type="catalytic activity">
    <reaction evidence="1">
        <text>glycine(in) = glycine(out)</text>
        <dbReference type="Rhea" id="RHEA:70715"/>
        <dbReference type="ChEBI" id="CHEBI:57305"/>
    </reaction>
</comment>
<comment type="subcellular location">
    <subcellularLocation>
        <location evidence="2">Mitochondrion inner membrane</location>
        <topology evidence="2">Multi-pass membrane protein</topology>
    </subcellularLocation>
</comment>
<comment type="similarity">
    <text evidence="2">Belongs to the mitochondrial carrier (TC 2.A.29) family. SLC25A38 subfamily.</text>
</comment>
<reference key="1">
    <citation type="journal article" date="2009" name="Genome Res.">
        <title>Comparative genomic analyses of the human fungal pathogens Coccidioides and their relatives.</title>
        <authorList>
            <person name="Sharpton T.J."/>
            <person name="Stajich J.E."/>
            <person name="Rounsley S.D."/>
            <person name="Gardner M.J."/>
            <person name="Wortman J.R."/>
            <person name="Jordar V.S."/>
            <person name="Maiti R."/>
            <person name="Kodira C.D."/>
            <person name="Neafsey D.E."/>
            <person name="Zeng Q."/>
            <person name="Hung C.-Y."/>
            <person name="McMahan C."/>
            <person name="Muszewska A."/>
            <person name="Grynberg M."/>
            <person name="Mandel M.A."/>
            <person name="Kellner E.M."/>
            <person name="Barker B.M."/>
            <person name="Galgiani J.N."/>
            <person name="Orbach M.J."/>
            <person name="Kirkland T.N."/>
            <person name="Cole G.T."/>
            <person name="Henn M.R."/>
            <person name="Birren B.W."/>
            <person name="Taylor J.W."/>
        </authorList>
    </citation>
    <scope>NUCLEOTIDE SEQUENCE [LARGE SCALE GENOMIC DNA]</scope>
    <source>
        <strain>NAm1 / WU24</strain>
    </source>
</reference>
<accession>A6RAY2</accession>